<feature type="peptide" id="PRO_0000378670" description="Hypertrehalosaemic factor" evidence="3">
    <location>
        <begin position="1"/>
        <end position="8"/>
    </location>
</feature>
<feature type="modified residue" description="Pyrrolidone carboxylic acid" evidence="3">
    <location>
        <position position="1"/>
    </location>
</feature>
<feature type="modified residue" description="Tryptophan amide" evidence="3">
    <location>
        <position position="8"/>
    </location>
</feature>
<protein>
    <recommendedName>
        <fullName evidence="1">Hypertrehalosaemic factor</fullName>
    </recommendedName>
    <alternativeName>
        <fullName evidence="4">Adipokinetic hormone 1</fullName>
        <shortName evidence="4">PseFl-AKH-1</shortName>
    </alternativeName>
    <alternativeName>
        <fullName evidence="1">Hypertrehalosaemic neuropeptide</fullName>
    </alternativeName>
</protein>
<comment type="function">
    <text evidence="5">Hypertrehalosaemic factors are neuropeptides that elevate the level of trehalose in the hemolymph (trehalose is the major carbohydrate in the hemolymph of insects).</text>
</comment>
<comment type="subcellular location">
    <subcellularLocation>
        <location evidence="5">Secreted</location>
    </subcellularLocation>
</comment>
<comment type="similarity">
    <text evidence="2">Belongs to the AKH/HRTH/RPCH family.</text>
</comment>
<name>HTF_PSEFV</name>
<keyword id="KW-0027">Amidation</keyword>
<keyword id="KW-0903">Direct protein sequencing</keyword>
<keyword id="KW-0372">Hormone</keyword>
<keyword id="KW-0527">Neuropeptide</keyword>
<keyword id="KW-0873">Pyrrolidone carboxylic acid</keyword>
<keyword id="KW-0964">Secreted</keyword>
<proteinExistence type="evidence at protein level"/>
<accession>P85756</accession>
<dbReference type="GO" id="GO:0005576">
    <property type="term" value="C:extracellular region"/>
    <property type="evidence" value="ECO:0007669"/>
    <property type="project" value="UniProtKB-SubCell"/>
</dbReference>
<dbReference type="GO" id="GO:0005179">
    <property type="term" value="F:hormone activity"/>
    <property type="evidence" value="ECO:0007669"/>
    <property type="project" value="UniProtKB-KW"/>
</dbReference>
<dbReference type="GO" id="GO:0007218">
    <property type="term" value="P:neuropeptide signaling pathway"/>
    <property type="evidence" value="ECO:0007669"/>
    <property type="project" value="UniProtKB-KW"/>
</dbReference>
<dbReference type="InterPro" id="IPR002047">
    <property type="entry name" value="Adipokinetic_hormone_CS"/>
</dbReference>
<dbReference type="PROSITE" id="PS00256">
    <property type="entry name" value="AKH"/>
    <property type="match status" value="1"/>
</dbReference>
<evidence type="ECO:0000250" key="1">
    <source>
        <dbReference type="UniProtKB" id="P67790"/>
    </source>
</evidence>
<evidence type="ECO:0000255" key="2"/>
<evidence type="ECO:0000269" key="3">
    <source>
    </source>
</evidence>
<evidence type="ECO:0000303" key="4">
    <source>
    </source>
</evidence>
<evidence type="ECO:0000305" key="5"/>
<sequence>QVNFSPNW</sequence>
<reference evidence="5" key="1">
    <citation type="journal article" date="2009" name="BMC Evol. Biol.">
        <title>A proteomic approach for studying insect phylogeny: CAPA peptides of ancient insect taxa (Dictyoptera, Blattoptera) as a test case.</title>
        <authorList>
            <person name="Roth S."/>
            <person name="Fromm B."/>
            <person name="Gaede G."/>
            <person name="Predel R."/>
        </authorList>
    </citation>
    <scope>PROTEIN SEQUENCE</scope>
    <scope>PYROGLUTAMATE FORMATION AT GLN-1</scope>
    <scope>AMIDATION AT TRP-8</scope>
    <source>
        <tissue evidence="3">Corpora cardiaca</tissue>
    </source>
</reference>
<organism>
    <name type="scientific">Pseudoderopeltis flavescens</name>
    <name type="common">Cockroach</name>
    <dbReference type="NCBI Taxonomy" id="303916"/>
    <lineage>
        <taxon>Eukaryota</taxon>
        <taxon>Metazoa</taxon>
        <taxon>Ecdysozoa</taxon>
        <taxon>Arthropoda</taxon>
        <taxon>Hexapoda</taxon>
        <taxon>Insecta</taxon>
        <taxon>Pterygota</taxon>
        <taxon>Neoptera</taxon>
        <taxon>Polyneoptera</taxon>
        <taxon>Dictyoptera</taxon>
        <taxon>Blattodea</taxon>
        <taxon>Blattoidea</taxon>
        <taxon>Blattidae</taxon>
        <taxon>Blattinae</taxon>
        <taxon>Pseudoderopeltis</taxon>
    </lineage>
</organism>